<gene>
    <name evidence="1" type="primary">rpsO</name>
    <name type="ordered locus">BVU_0896</name>
</gene>
<proteinExistence type="inferred from homology"/>
<comment type="function">
    <text evidence="1">One of the primary rRNA binding proteins, it binds directly to 16S rRNA where it helps nucleate assembly of the platform of the 30S subunit by binding and bridging several RNA helices of the 16S rRNA.</text>
</comment>
<comment type="function">
    <text evidence="1">Forms an intersubunit bridge (bridge B4) with the 23S rRNA of the 50S subunit in the ribosome.</text>
</comment>
<comment type="subunit">
    <text evidence="1">Part of the 30S ribosomal subunit. Forms a bridge to the 50S subunit in the 70S ribosome, contacting the 23S rRNA.</text>
</comment>
<comment type="similarity">
    <text evidence="1">Belongs to the universal ribosomal protein uS15 family.</text>
</comment>
<organism>
    <name type="scientific">Phocaeicola vulgatus (strain ATCC 8482 / DSM 1447 / JCM 5826 / CCUG 4940 / NBRC 14291 / NCTC 11154)</name>
    <name type="common">Bacteroides vulgatus</name>
    <dbReference type="NCBI Taxonomy" id="435590"/>
    <lineage>
        <taxon>Bacteria</taxon>
        <taxon>Pseudomonadati</taxon>
        <taxon>Bacteroidota</taxon>
        <taxon>Bacteroidia</taxon>
        <taxon>Bacteroidales</taxon>
        <taxon>Bacteroidaceae</taxon>
        <taxon>Phocaeicola</taxon>
    </lineage>
</organism>
<name>RS15_PHOV8</name>
<sequence length="89" mass="10364">MYLDAAKKQEIFEKYGKSNTDTGSAEAQIALFSYRISHLTEHLKLNRKDYSTERALTTLVGKRRALLNYLKNRDIERYRAIVKALGLRK</sequence>
<dbReference type="EMBL" id="CP000139">
    <property type="protein sequence ID" value="ABR38591.1"/>
    <property type="molecule type" value="Genomic_DNA"/>
</dbReference>
<dbReference type="RefSeq" id="WP_005844439.1">
    <property type="nucleotide sequence ID" value="NZ_JANSWM010000124.1"/>
</dbReference>
<dbReference type="SMR" id="A6KYS7"/>
<dbReference type="STRING" id="435590.BVU_0896"/>
<dbReference type="PaxDb" id="435590-BVU_0896"/>
<dbReference type="GeneID" id="93449249"/>
<dbReference type="KEGG" id="bvu:BVU_0896"/>
<dbReference type="eggNOG" id="COG0184">
    <property type="taxonomic scope" value="Bacteria"/>
</dbReference>
<dbReference type="HOGENOM" id="CLU_148518_0_1_10"/>
<dbReference type="BioCyc" id="BVUL435590:G1G59-939-MONOMER"/>
<dbReference type="Proteomes" id="UP000002861">
    <property type="component" value="Chromosome"/>
</dbReference>
<dbReference type="GO" id="GO:0022627">
    <property type="term" value="C:cytosolic small ribosomal subunit"/>
    <property type="evidence" value="ECO:0007669"/>
    <property type="project" value="TreeGrafter"/>
</dbReference>
<dbReference type="GO" id="GO:0019843">
    <property type="term" value="F:rRNA binding"/>
    <property type="evidence" value="ECO:0007669"/>
    <property type="project" value="UniProtKB-UniRule"/>
</dbReference>
<dbReference type="GO" id="GO:0003735">
    <property type="term" value="F:structural constituent of ribosome"/>
    <property type="evidence" value="ECO:0007669"/>
    <property type="project" value="InterPro"/>
</dbReference>
<dbReference type="GO" id="GO:0006412">
    <property type="term" value="P:translation"/>
    <property type="evidence" value="ECO:0007669"/>
    <property type="project" value="UniProtKB-UniRule"/>
</dbReference>
<dbReference type="CDD" id="cd00353">
    <property type="entry name" value="Ribosomal_S15p_S13e"/>
    <property type="match status" value="1"/>
</dbReference>
<dbReference type="FunFam" id="1.10.287.10:FF:000002">
    <property type="entry name" value="30S ribosomal protein S15"/>
    <property type="match status" value="1"/>
</dbReference>
<dbReference type="Gene3D" id="6.10.250.3130">
    <property type="match status" value="1"/>
</dbReference>
<dbReference type="Gene3D" id="1.10.287.10">
    <property type="entry name" value="S15/NS1, RNA-binding"/>
    <property type="match status" value="1"/>
</dbReference>
<dbReference type="HAMAP" id="MF_01343_B">
    <property type="entry name" value="Ribosomal_uS15_B"/>
    <property type="match status" value="1"/>
</dbReference>
<dbReference type="InterPro" id="IPR000589">
    <property type="entry name" value="Ribosomal_uS15"/>
</dbReference>
<dbReference type="InterPro" id="IPR005290">
    <property type="entry name" value="Ribosomal_uS15_bac-type"/>
</dbReference>
<dbReference type="InterPro" id="IPR009068">
    <property type="entry name" value="uS15_NS1_RNA-bd_sf"/>
</dbReference>
<dbReference type="NCBIfam" id="TIGR00952">
    <property type="entry name" value="S15_bact"/>
    <property type="match status" value="1"/>
</dbReference>
<dbReference type="PANTHER" id="PTHR23321">
    <property type="entry name" value="RIBOSOMAL PROTEIN S15, BACTERIAL AND ORGANELLAR"/>
    <property type="match status" value="1"/>
</dbReference>
<dbReference type="PANTHER" id="PTHR23321:SF26">
    <property type="entry name" value="SMALL RIBOSOMAL SUBUNIT PROTEIN US15M"/>
    <property type="match status" value="1"/>
</dbReference>
<dbReference type="Pfam" id="PF00312">
    <property type="entry name" value="Ribosomal_S15"/>
    <property type="match status" value="1"/>
</dbReference>
<dbReference type="SMART" id="SM01387">
    <property type="entry name" value="Ribosomal_S15"/>
    <property type="match status" value="1"/>
</dbReference>
<dbReference type="SUPFAM" id="SSF47060">
    <property type="entry name" value="S15/NS1 RNA-binding domain"/>
    <property type="match status" value="1"/>
</dbReference>
<dbReference type="PROSITE" id="PS00362">
    <property type="entry name" value="RIBOSOMAL_S15"/>
    <property type="match status" value="1"/>
</dbReference>
<feature type="chain" id="PRO_1000054751" description="Small ribosomal subunit protein uS15">
    <location>
        <begin position="1"/>
        <end position="89"/>
    </location>
</feature>
<protein>
    <recommendedName>
        <fullName evidence="1">Small ribosomal subunit protein uS15</fullName>
    </recommendedName>
    <alternativeName>
        <fullName evidence="2">30S ribosomal protein S15</fullName>
    </alternativeName>
</protein>
<keyword id="KW-0687">Ribonucleoprotein</keyword>
<keyword id="KW-0689">Ribosomal protein</keyword>
<keyword id="KW-0694">RNA-binding</keyword>
<keyword id="KW-0699">rRNA-binding</keyword>
<accession>A6KYS7</accession>
<reference key="1">
    <citation type="journal article" date="2007" name="PLoS Biol.">
        <title>Evolution of symbiotic bacteria in the distal human intestine.</title>
        <authorList>
            <person name="Xu J."/>
            <person name="Mahowald M.A."/>
            <person name="Ley R.E."/>
            <person name="Lozupone C.A."/>
            <person name="Hamady M."/>
            <person name="Martens E.C."/>
            <person name="Henrissat B."/>
            <person name="Coutinho P.M."/>
            <person name="Minx P."/>
            <person name="Latreille P."/>
            <person name="Cordum H."/>
            <person name="Van Brunt A."/>
            <person name="Kim K."/>
            <person name="Fulton R.S."/>
            <person name="Fulton L.A."/>
            <person name="Clifton S.W."/>
            <person name="Wilson R.K."/>
            <person name="Knight R.D."/>
            <person name="Gordon J.I."/>
        </authorList>
    </citation>
    <scope>NUCLEOTIDE SEQUENCE [LARGE SCALE GENOMIC DNA]</scope>
    <source>
        <strain>ATCC 8482 / DSM 1447 / JCM 5826 / CCUG 4940 / NBRC 14291 / NCTC 11154</strain>
    </source>
</reference>
<evidence type="ECO:0000255" key="1">
    <source>
        <dbReference type="HAMAP-Rule" id="MF_01343"/>
    </source>
</evidence>
<evidence type="ECO:0000305" key="2"/>